<protein>
    <recommendedName>
        <fullName evidence="1">Proline--tRNA ligase</fullName>
        <ecNumber evidence="1">6.1.1.15</ecNumber>
    </recommendedName>
    <alternativeName>
        <fullName evidence="1">Prolyl-tRNA synthetase</fullName>
        <shortName evidence="1">ProRS</shortName>
    </alternativeName>
</protein>
<name>SYP_CLOB6</name>
<accession>C3KUV8</accession>
<evidence type="ECO:0000255" key="1">
    <source>
        <dbReference type="HAMAP-Rule" id="MF_01571"/>
    </source>
</evidence>
<feature type="chain" id="PRO_1000215555" description="Proline--tRNA ligase">
    <location>
        <begin position="1"/>
        <end position="478"/>
    </location>
</feature>
<reference key="1">
    <citation type="submission" date="2008-05" db="EMBL/GenBank/DDBJ databases">
        <title>Genome sequence of Clostridium botulinum Ba4 strain 657.</title>
        <authorList>
            <person name="Shrivastava S."/>
            <person name="Brown J.L."/>
            <person name="Bruce D."/>
            <person name="Detter C."/>
            <person name="Munk C."/>
            <person name="Smith L.A."/>
            <person name="Smith T.J."/>
            <person name="Sutton G."/>
            <person name="Brettin T.S."/>
        </authorList>
    </citation>
    <scope>NUCLEOTIDE SEQUENCE [LARGE SCALE GENOMIC DNA]</scope>
    <source>
        <strain>657 / Type Ba4</strain>
    </source>
</reference>
<gene>
    <name evidence="1" type="primary">proS</name>
    <name type="ordered locus">CLJ_B3627</name>
</gene>
<proteinExistence type="inferred from homology"/>
<dbReference type="EC" id="6.1.1.15" evidence="1"/>
<dbReference type="EMBL" id="CP001083">
    <property type="protein sequence ID" value="ACQ51712.1"/>
    <property type="molecule type" value="Genomic_DNA"/>
</dbReference>
<dbReference type="RefSeq" id="WP_012720461.1">
    <property type="nucleotide sequence ID" value="NC_012658.1"/>
</dbReference>
<dbReference type="SMR" id="C3KUV8"/>
<dbReference type="KEGG" id="cbi:CLJ_B3627"/>
<dbReference type="HOGENOM" id="CLU_001882_4_2_9"/>
<dbReference type="Proteomes" id="UP000002333">
    <property type="component" value="Chromosome"/>
</dbReference>
<dbReference type="GO" id="GO:0017101">
    <property type="term" value="C:aminoacyl-tRNA synthetase multienzyme complex"/>
    <property type="evidence" value="ECO:0007669"/>
    <property type="project" value="TreeGrafter"/>
</dbReference>
<dbReference type="GO" id="GO:0005737">
    <property type="term" value="C:cytoplasm"/>
    <property type="evidence" value="ECO:0007669"/>
    <property type="project" value="UniProtKB-SubCell"/>
</dbReference>
<dbReference type="GO" id="GO:0005524">
    <property type="term" value="F:ATP binding"/>
    <property type="evidence" value="ECO:0007669"/>
    <property type="project" value="UniProtKB-UniRule"/>
</dbReference>
<dbReference type="GO" id="GO:0140096">
    <property type="term" value="F:catalytic activity, acting on a protein"/>
    <property type="evidence" value="ECO:0007669"/>
    <property type="project" value="UniProtKB-ARBA"/>
</dbReference>
<dbReference type="GO" id="GO:0004827">
    <property type="term" value="F:proline-tRNA ligase activity"/>
    <property type="evidence" value="ECO:0007669"/>
    <property type="project" value="UniProtKB-UniRule"/>
</dbReference>
<dbReference type="GO" id="GO:0016740">
    <property type="term" value="F:transferase activity"/>
    <property type="evidence" value="ECO:0007669"/>
    <property type="project" value="UniProtKB-ARBA"/>
</dbReference>
<dbReference type="GO" id="GO:0006433">
    <property type="term" value="P:prolyl-tRNA aminoacylation"/>
    <property type="evidence" value="ECO:0007669"/>
    <property type="project" value="UniProtKB-UniRule"/>
</dbReference>
<dbReference type="CDD" id="cd00862">
    <property type="entry name" value="ProRS_anticodon_zinc"/>
    <property type="match status" value="1"/>
</dbReference>
<dbReference type="CDD" id="cd00778">
    <property type="entry name" value="ProRS_core_arch_euk"/>
    <property type="match status" value="1"/>
</dbReference>
<dbReference type="FunFam" id="3.40.50.800:FF:000005">
    <property type="entry name" value="bifunctional glutamate/proline--tRNA ligase"/>
    <property type="match status" value="1"/>
</dbReference>
<dbReference type="FunFam" id="3.30.110.30:FF:000005">
    <property type="entry name" value="Proline--tRNA ligase"/>
    <property type="match status" value="1"/>
</dbReference>
<dbReference type="FunFam" id="3.30.930.10:FF:000023">
    <property type="entry name" value="Proline--tRNA ligase"/>
    <property type="match status" value="1"/>
</dbReference>
<dbReference type="Gene3D" id="3.40.50.800">
    <property type="entry name" value="Anticodon-binding domain"/>
    <property type="match status" value="1"/>
</dbReference>
<dbReference type="Gene3D" id="3.30.930.10">
    <property type="entry name" value="Bira Bifunctional Protein, Domain 2"/>
    <property type="match status" value="1"/>
</dbReference>
<dbReference type="Gene3D" id="3.30.110.30">
    <property type="entry name" value="C-terminal domain of ProRS"/>
    <property type="match status" value="1"/>
</dbReference>
<dbReference type="HAMAP" id="MF_01571">
    <property type="entry name" value="Pro_tRNA_synth_type3"/>
    <property type="match status" value="1"/>
</dbReference>
<dbReference type="InterPro" id="IPR002314">
    <property type="entry name" value="aa-tRNA-synt_IIb"/>
</dbReference>
<dbReference type="InterPro" id="IPR006195">
    <property type="entry name" value="aa-tRNA-synth_II"/>
</dbReference>
<dbReference type="InterPro" id="IPR045864">
    <property type="entry name" value="aa-tRNA-synth_II/BPL/LPL"/>
</dbReference>
<dbReference type="InterPro" id="IPR004154">
    <property type="entry name" value="Anticodon-bd"/>
</dbReference>
<dbReference type="InterPro" id="IPR036621">
    <property type="entry name" value="Anticodon-bd_dom_sf"/>
</dbReference>
<dbReference type="InterPro" id="IPR002316">
    <property type="entry name" value="Pro-tRNA-ligase_IIa"/>
</dbReference>
<dbReference type="InterPro" id="IPR004499">
    <property type="entry name" value="Pro-tRNA-ligase_IIa_arc-type"/>
</dbReference>
<dbReference type="InterPro" id="IPR016061">
    <property type="entry name" value="Pro-tRNA_ligase_II_C"/>
</dbReference>
<dbReference type="InterPro" id="IPR017449">
    <property type="entry name" value="Pro-tRNA_synth_II"/>
</dbReference>
<dbReference type="InterPro" id="IPR033721">
    <property type="entry name" value="ProRS_core_arch_euk"/>
</dbReference>
<dbReference type="NCBIfam" id="TIGR00408">
    <property type="entry name" value="proS_fam_I"/>
    <property type="match status" value="1"/>
</dbReference>
<dbReference type="PANTHER" id="PTHR43382:SF2">
    <property type="entry name" value="BIFUNCTIONAL GLUTAMATE_PROLINE--TRNA LIGASE"/>
    <property type="match status" value="1"/>
</dbReference>
<dbReference type="PANTHER" id="PTHR43382">
    <property type="entry name" value="PROLYL-TRNA SYNTHETASE"/>
    <property type="match status" value="1"/>
</dbReference>
<dbReference type="Pfam" id="PF03129">
    <property type="entry name" value="HGTP_anticodon"/>
    <property type="match status" value="1"/>
</dbReference>
<dbReference type="Pfam" id="PF09180">
    <property type="entry name" value="ProRS-C_1"/>
    <property type="match status" value="1"/>
</dbReference>
<dbReference type="Pfam" id="PF00587">
    <property type="entry name" value="tRNA-synt_2b"/>
    <property type="match status" value="1"/>
</dbReference>
<dbReference type="PRINTS" id="PR01046">
    <property type="entry name" value="TRNASYNTHPRO"/>
</dbReference>
<dbReference type="SMART" id="SM00946">
    <property type="entry name" value="ProRS-C_1"/>
    <property type="match status" value="1"/>
</dbReference>
<dbReference type="SUPFAM" id="SSF64586">
    <property type="entry name" value="C-terminal domain of ProRS"/>
    <property type="match status" value="1"/>
</dbReference>
<dbReference type="SUPFAM" id="SSF52954">
    <property type="entry name" value="Class II aaRS ABD-related"/>
    <property type="match status" value="1"/>
</dbReference>
<dbReference type="SUPFAM" id="SSF55681">
    <property type="entry name" value="Class II aaRS and biotin synthetases"/>
    <property type="match status" value="1"/>
</dbReference>
<dbReference type="PROSITE" id="PS50862">
    <property type="entry name" value="AA_TRNA_LIGASE_II"/>
    <property type="match status" value="1"/>
</dbReference>
<sequence length="478" mass="55046">MAKDKKFVEDITPMDEDFAQWYTDIVKKAELADYSSIKGCMIIRPNGYAIWENIQKYVDTKLKEYGHENVSMPIFIPENLLQKEKDHVEGFAPEVAWVTHGGDDELAERLCVRPTSETLFCEHYAKIVQSYKDLPKLYNQWCSVVRWEKTTRPFLRTTEFLWQEGHTIHETKEEAESHSLKILNMYSRLCEDMLAMPVVMGKKTEKEKFAGADDTYTIESLMHDGKALQAGTSHYLGQNFSKAFAIQFSDRNGKLEYPHYTTWAVTTRLIGAIIMVHGDDSGLKLPPRIAPTQAVIIPVAQHKEGVLEKAKELKERLAKVVRVKLDDSDKMPGWKYSEYEMKGIPLRIEIGPKDIEKNQAVLVRRDNREKTIVSLDEIEVKVQEMLDIIHNSMLEEARKSRDEKTYVAITMEEFEDIIENKPGFIKAMWCGDRACEDKIREVTGATSRCMPFEQEVVSDTCVCCGKKAKNLVYWGRAY</sequence>
<organism>
    <name type="scientific">Clostridium botulinum (strain 657 / Type Ba4)</name>
    <dbReference type="NCBI Taxonomy" id="515621"/>
    <lineage>
        <taxon>Bacteria</taxon>
        <taxon>Bacillati</taxon>
        <taxon>Bacillota</taxon>
        <taxon>Clostridia</taxon>
        <taxon>Eubacteriales</taxon>
        <taxon>Clostridiaceae</taxon>
        <taxon>Clostridium</taxon>
    </lineage>
</organism>
<comment type="function">
    <text evidence="1">Catalyzes the attachment of proline to tRNA(Pro) in a two-step reaction: proline is first activated by ATP to form Pro-AMP and then transferred to the acceptor end of tRNA(Pro).</text>
</comment>
<comment type="catalytic activity">
    <reaction evidence="1">
        <text>tRNA(Pro) + L-proline + ATP = L-prolyl-tRNA(Pro) + AMP + diphosphate</text>
        <dbReference type="Rhea" id="RHEA:14305"/>
        <dbReference type="Rhea" id="RHEA-COMP:9700"/>
        <dbReference type="Rhea" id="RHEA-COMP:9702"/>
        <dbReference type="ChEBI" id="CHEBI:30616"/>
        <dbReference type="ChEBI" id="CHEBI:33019"/>
        <dbReference type="ChEBI" id="CHEBI:60039"/>
        <dbReference type="ChEBI" id="CHEBI:78442"/>
        <dbReference type="ChEBI" id="CHEBI:78532"/>
        <dbReference type="ChEBI" id="CHEBI:456215"/>
        <dbReference type="EC" id="6.1.1.15"/>
    </reaction>
</comment>
<comment type="subunit">
    <text evidence="1">Homodimer.</text>
</comment>
<comment type="subcellular location">
    <subcellularLocation>
        <location evidence="1">Cytoplasm</location>
    </subcellularLocation>
</comment>
<comment type="domain">
    <text evidence="1">Consists of three domains: the N-terminal catalytic domain, the anticodon-binding domain and the C-terminal extension.</text>
</comment>
<comment type="similarity">
    <text evidence="1">Belongs to the class-II aminoacyl-tRNA synthetase family. ProS type 3 subfamily.</text>
</comment>
<keyword id="KW-0030">Aminoacyl-tRNA synthetase</keyword>
<keyword id="KW-0067">ATP-binding</keyword>
<keyword id="KW-0963">Cytoplasm</keyword>
<keyword id="KW-0436">Ligase</keyword>
<keyword id="KW-0547">Nucleotide-binding</keyword>
<keyword id="KW-0648">Protein biosynthesis</keyword>